<gene>
    <name evidence="10" type="primary">ZNF683</name>
</gene>
<proteinExistence type="evidence at protein level"/>
<accession>Q8IZ20</accession>
<accession>Q5T141</accession>
<accession>Q5T146</accession>
<accession>Q5T147</accession>
<accession>Q5T149</accession>
<accession>Q8NEN4</accession>
<sequence>MKEESAAQLGCCHRPMALGGTGGSLSPSLDFQLFRGDQVFSACRPLPDMVDAHGPSCASWLCPLPLAPGRSALLACLQDLDLNLCTPQPAPLGTDLQGLQEDALSMKHEPPGLQASSTDDKKFTVKYPQNKDKLGKQPERAGEGAPCPAFSSHNSSSPPPLQNRKSPSPLAFCPCPPVNSISKELPFLLHAFYPGYPLLLPPPHLFTYGALPSDQCPHLLMLPQDPSYPTMAMPSLLMMVNELGHPSARWETLLPYPGAFQASGQALPSQARNPGAGAAPTDSPGLERGGMASPAKRVPLSSQTGTAALPYPLKKKNGKILYECNICGKSFGQLSNLKVHLRVHSGERPFQCALCQKSFTQLAHLQKHHLVHTGERPHKCSIPWVPGRNHWKSFQAWREREVCHKRFSSSSNLKTHLRLHSGARPFQCSVCRSRFTQHIHLKLHHRLHAPQPCGLVHTQLPLASLACLAQWHQGALDLMAVASEKHMGYDIDEVKVSSTSQGKARAVSLSSAGTPLVMGQDQNN</sequence>
<evidence type="ECO:0000250" key="1">
    <source>
        <dbReference type="UniProtKB" id="I7HJS4"/>
    </source>
</evidence>
<evidence type="ECO:0000255" key="2">
    <source>
        <dbReference type="PROSITE-ProRule" id="PRU00042"/>
    </source>
</evidence>
<evidence type="ECO:0000256" key="3">
    <source>
        <dbReference type="SAM" id="MobiDB-lite"/>
    </source>
</evidence>
<evidence type="ECO:0000269" key="4">
    <source>
    </source>
</evidence>
<evidence type="ECO:0000269" key="5">
    <source>
    </source>
</evidence>
<evidence type="ECO:0000269" key="6">
    <source>
    </source>
</evidence>
<evidence type="ECO:0000303" key="7">
    <source>
    </source>
</evidence>
<evidence type="ECO:0000303" key="8">
    <source>
    </source>
</evidence>
<evidence type="ECO:0000305" key="9"/>
<evidence type="ECO:0000312" key="10">
    <source>
        <dbReference type="HGNC" id="HGNC:28495"/>
    </source>
</evidence>
<name>ZN683_HUMAN</name>
<protein>
    <recommendedName>
        <fullName evidence="9">Tissue-resident T-cell transcription regulator protein ZNF683</fullName>
    </recommendedName>
    <alternativeName>
        <fullName evidence="1">Homolog of Blimp-1 in T-cell</fullName>
        <shortName evidence="1">Hobit</shortName>
    </alternativeName>
    <alternativeName>
        <fullName evidence="10">Zinc finger protein 683</fullName>
    </alternativeName>
</protein>
<dbReference type="EMBL" id="AL451139">
    <property type="status" value="NOT_ANNOTATED_CDS"/>
    <property type="molecule type" value="Genomic_DNA"/>
</dbReference>
<dbReference type="EMBL" id="BC028731">
    <property type="protein sequence ID" value="AAH28731.2"/>
    <property type="status" value="ALT_INIT"/>
    <property type="molecule type" value="mRNA"/>
</dbReference>
<dbReference type="EMBL" id="BC029505">
    <property type="protein sequence ID" value="AAH29505.1"/>
    <property type="status" value="ALT_INIT"/>
    <property type="molecule type" value="mRNA"/>
</dbReference>
<dbReference type="CCDS" id="CCDS279.2">
    <molecule id="Q8IZ20-2"/>
</dbReference>
<dbReference type="CCDS" id="CCDS76126.1">
    <molecule id="Q8IZ20-1"/>
</dbReference>
<dbReference type="RefSeq" id="NP_001108231.1">
    <molecule id="Q8IZ20-2"/>
    <property type="nucleotide sequence ID" value="NM_001114759.3"/>
</dbReference>
<dbReference type="RefSeq" id="NP_001294854.1">
    <molecule id="Q8IZ20-1"/>
    <property type="nucleotide sequence ID" value="NM_001307925.1"/>
</dbReference>
<dbReference type="RefSeq" id="NP_775845.2">
    <molecule id="Q8IZ20-2"/>
    <property type="nucleotide sequence ID" value="NM_173574.3"/>
</dbReference>
<dbReference type="RefSeq" id="XP_005245887.1">
    <molecule id="Q8IZ20-1"/>
    <property type="nucleotide sequence ID" value="XM_005245830.4"/>
</dbReference>
<dbReference type="RefSeq" id="XP_005245889.1">
    <molecule id="Q8IZ20-1"/>
    <property type="nucleotide sequence ID" value="XM_005245832.4"/>
</dbReference>
<dbReference type="RefSeq" id="XP_011539500.1">
    <molecule id="Q8IZ20-1"/>
    <property type="nucleotide sequence ID" value="XM_011541198.3"/>
</dbReference>
<dbReference type="RefSeq" id="XP_054191813.1">
    <molecule id="Q8IZ20-1"/>
    <property type="nucleotide sequence ID" value="XM_054335838.1"/>
</dbReference>
<dbReference type="RefSeq" id="XP_054191814.1">
    <molecule id="Q8IZ20-1"/>
    <property type="nucleotide sequence ID" value="XM_054335839.1"/>
</dbReference>
<dbReference type="RefSeq" id="XP_054191815.1">
    <molecule id="Q8IZ20-1"/>
    <property type="nucleotide sequence ID" value="XM_054335840.1"/>
</dbReference>
<dbReference type="SMR" id="Q8IZ20"/>
<dbReference type="BioGRID" id="129197">
    <property type="interactions" value="9"/>
</dbReference>
<dbReference type="FunCoup" id="Q8IZ20">
    <property type="interactions" value="5"/>
</dbReference>
<dbReference type="IntAct" id="Q8IZ20">
    <property type="interactions" value="5"/>
</dbReference>
<dbReference type="STRING" id="9606.ENSP00000388792"/>
<dbReference type="GlyGen" id="Q8IZ20">
    <property type="glycosylation" value="1 site"/>
</dbReference>
<dbReference type="iPTMnet" id="Q8IZ20"/>
<dbReference type="PhosphoSitePlus" id="Q8IZ20"/>
<dbReference type="BioMuta" id="ZNF683"/>
<dbReference type="DMDM" id="205371859"/>
<dbReference type="jPOST" id="Q8IZ20"/>
<dbReference type="MassIVE" id="Q8IZ20"/>
<dbReference type="PaxDb" id="9606-ENSP00000344095"/>
<dbReference type="PeptideAtlas" id="Q8IZ20"/>
<dbReference type="ProteomicsDB" id="71269">
    <molecule id="Q8IZ20-1"/>
</dbReference>
<dbReference type="ProteomicsDB" id="71270">
    <molecule id="Q8IZ20-2"/>
</dbReference>
<dbReference type="Antibodypedia" id="16076">
    <property type="antibodies" value="53 antibodies from 16 providers"/>
</dbReference>
<dbReference type="DNASU" id="257101"/>
<dbReference type="Ensembl" id="ENST00000349618.8">
    <molecule id="Q8IZ20-2"/>
    <property type="protein sequence ID" value="ENSP00000344095.3"/>
    <property type="gene ID" value="ENSG00000176083.18"/>
</dbReference>
<dbReference type="Ensembl" id="ENST00000403843.5">
    <molecule id="Q8IZ20-1"/>
    <property type="protein sequence ID" value="ENSP00000384782.1"/>
    <property type="gene ID" value="ENSG00000176083.18"/>
</dbReference>
<dbReference type="Ensembl" id="ENST00000436292.5">
    <molecule id="Q8IZ20-1"/>
    <property type="protein sequence ID" value="ENSP00000388792.1"/>
    <property type="gene ID" value="ENSG00000176083.18"/>
</dbReference>
<dbReference type="GeneID" id="257101"/>
<dbReference type="KEGG" id="hsa:257101"/>
<dbReference type="MANE-Select" id="ENST00000349618.8">
    <molecule id="Q8IZ20-2"/>
    <property type="protein sequence ID" value="ENSP00000344095.3"/>
    <property type="RefSeq nucleotide sequence ID" value="NM_001114759.3"/>
    <property type="RefSeq protein sequence ID" value="NP_001108231.1"/>
</dbReference>
<dbReference type="UCSC" id="uc001bmg.2">
    <molecule id="Q8IZ20-1"/>
    <property type="organism name" value="human"/>
</dbReference>
<dbReference type="AGR" id="HGNC:28495"/>
<dbReference type="CTD" id="257101"/>
<dbReference type="DisGeNET" id="257101"/>
<dbReference type="GeneCards" id="ZNF683"/>
<dbReference type="HGNC" id="HGNC:28495">
    <property type="gene designation" value="ZNF683"/>
</dbReference>
<dbReference type="HPA" id="ENSG00000176083">
    <property type="expression patterns" value="Tissue enriched (testis)"/>
</dbReference>
<dbReference type="neXtProt" id="NX_Q8IZ20"/>
<dbReference type="OpenTargets" id="ENSG00000176083"/>
<dbReference type="PharmGKB" id="PA142670484"/>
<dbReference type="VEuPathDB" id="HostDB:ENSG00000176083"/>
<dbReference type="eggNOG" id="KOG2461">
    <property type="taxonomic scope" value="Eukaryota"/>
</dbReference>
<dbReference type="GeneTree" id="ENSGT00940000163172"/>
<dbReference type="HOGENOM" id="CLU_040814_0_0_1"/>
<dbReference type="InParanoid" id="Q8IZ20"/>
<dbReference type="OMA" id="KCQMCHK"/>
<dbReference type="OrthoDB" id="9345291at2759"/>
<dbReference type="PAN-GO" id="Q8IZ20">
    <property type="GO annotations" value="3 GO annotations based on evolutionary models"/>
</dbReference>
<dbReference type="PhylomeDB" id="Q8IZ20"/>
<dbReference type="TreeFam" id="TF316545"/>
<dbReference type="PathwayCommons" id="Q8IZ20"/>
<dbReference type="SignaLink" id="Q8IZ20"/>
<dbReference type="BioGRID-ORCS" id="257101">
    <property type="hits" value="13 hits in 1169 CRISPR screens"/>
</dbReference>
<dbReference type="ChiTaRS" id="ZNF683">
    <property type="organism name" value="human"/>
</dbReference>
<dbReference type="GenomeRNAi" id="257101"/>
<dbReference type="Pharos" id="Q8IZ20">
    <property type="development level" value="Tbio"/>
</dbReference>
<dbReference type="PRO" id="PR:Q8IZ20"/>
<dbReference type="Proteomes" id="UP000005640">
    <property type="component" value="Chromosome 1"/>
</dbReference>
<dbReference type="RNAct" id="Q8IZ20">
    <property type="molecule type" value="protein"/>
</dbReference>
<dbReference type="Bgee" id="ENSG00000176083">
    <property type="expression patterns" value="Expressed in sperm and 149 other cell types or tissues"/>
</dbReference>
<dbReference type="ExpressionAtlas" id="Q8IZ20">
    <property type="expression patterns" value="baseline and differential"/>
</dbReference>
<dbReference type="GO" id="GO:0005634">
    <property type="term" value="C:nucleus"/>
    <property type="evidence" value="ECO:0007669"/>
    <property type="project" value="UniProtKB-SubCell"/>
</dbReference>
<dbReference type="GO" id="GO:0003700">
    <property type="term" value="F:DNA-binding transcription factor activity"/>
    <property type="evidence" value="ECO:0000318"/>
    <property type="project" value="GO_Central"/>
</dbReference>
<dbReference type="GO" id="GO:1990841">
    <property type="term" value="F:promoter-specific chromatin binding"/>
    <property type="evidence" value="ECO:0000250"/>
    <property type="project" value="UniProtKB"/>
</dbReference>
<dbReference type="GO" id="GO:0000978">
    <property type="term" value="F:RNA polymerase II cis-regulatory region sequence-specific DNA binding"/>
    <property type="evidence" value="ECO:0000314"/>
    <property type="project" value="UniProtKB"/>
</dbReference>
<dbReference type="GO" id="GO:0008270">
    <property type="term" value="F:zinc ion binding"/>
    <property type="evidence" value="ECO:0007669"/>
    <property type="project" value="UniProtKB-KW"/>
</dbReference>
<dbReference type="GO" id="GO:0002250">
    <property type="term" value="P:adaptive immune response"/>
    <property type="evidence" value="ECO:0007669"/>
    <property type="project" value="UniProtKB-KW"/>
</dbReference>
<dbReference type="GO" id="GO:1904637">
    <property type="term" value="P:cellular response to ionomycin"/>
    <property type="evidence" value="ECO:0000314"/>
    <property type="project" value="UniProtKB"/>
</dbReference>
<dbReference type="GO" id="GO:0045087">
    <property type="term" value="P:innate immune response"/>
    <property type="evidence" value="ECO:0007669"/>
    <property type="project" value="UniProtKB-KW"/>
</dbReference>
<dbReference type="GO" id="GO:0000122">
    <property type="term" value="P:negative regulation of transcription by RNA polymerase II"/>
    <property type="evidence" value="ECO:0000314"/>
    <property type="project" value="UniProtKB"/>
</dbReference>
<dbReference type="GO" id="GO:0032689">
    <property type="term" value="P:negative regulation of type II interferon production"/>
    <property type="evidence" value="ECO:0000314"/>
    <property type="project" value="UniProtKB"/>
</dbReference>
<dbReference type="GO" id="GO:0010628">
    <property type="term" value="P:positive regulation of gene expression"/>
    <property type="evidence" value="ECO:0000314"/>
    <property type="project" value="UniProtKB"/>
</dbReference>
<dbReference type="GO" id="GO:0033082">
    <property type="term" value="P:regulation of extrathymic T cell differentiation"/>
    <property type="evidence" value="ECO:0000250"/>
    <property type="project" value="UniProtKB"/>
</dbReference>
<dbReference type="GO" id="GO:0010468">
    <property type="term" value="P:regulation of gene expression"/>
    <property type="evidence" value="ECO:0000250"/>
    <property type="project" value="UniProtKB"/>
</dbReference>
<dbReference type="GO" id="GO:0032823">
    <property type="term" value="P:regulation of natural killer cell differentiation"/>
    <property type="evidence" value="ECO:0000250"/>
    <property type="project" value="UniProtKB"/>
</dbReference>
<dbReference type="GO" id="GO:0032826">
    <property type="term" value="P:regulation of natural killer cell differentiation involved in immune response"/>
    <property type="evidence" value="ECO:0000250"/>
    <property type="project" value="UniProtKB"/>
</dbReference>
<dbReference type="GO" id="GO:0051136">
    <property type="term" value="P:regulation of NK T cell differentiation"/>
    <property type="evidence" value="ECO:0000250"/>
    <property type="project" value="UniProtKB"/>
</dbReference>
<dbReference type="GO" id="GO:0006357">
    <property type="term" value="P:regulation of transcription by RNA polymerase II"/>
    <property type="evidence" value="ECO:0000318"/>
    <property type="project" value="GO_Central"/>
</dbReference>
<dbReference type="GO" id="GO:0050852">
    <property type="term" value="P:T cell receptor signaling pathway"/>
    <property type="evidence" value="ECO:0000314"/>
    <property type="project" value="UniProtKB"/>
</dbReference>
<dbReference type="FunFam" id="3.30.160.60:FF:000132">
    <property type="entry name" value="PR domain zinc finger protein 1"/>
    <property type="match status" value="1"/>
</dbReference>
<dbReference type="FunFam" id="3.30.160.60:FF:001667">
    <property type="entry name" value="tissue-resident T-cell transcription regulator protein ZNF683"/>
    <property type="match status" value="1"/>
</dbReference>
<dbReference type="FunFam" id="3.30.160.60:FF:001272">
    <property type="entry name" value="Zinc finger protein 683"/>
    <property type="match status" value="1"/>
</dbReference>
<dbReference type="Gene3D" id="3.30.160.60">
    <property type="entry name" value="Classic Zinc Finger"/>
    <property type="match status" value="4"/>
</dbReference>
<dbReference type="InterPro" id="IPR050331">
    <property type="entry name" value="Zinc_finger"/>
</dbReference>
<dbReference type="InterPro" id="IPR036236">
    <property type="entry name" value="Znf_C2H2_sf"/>
</dbReference>
<dbReference type="InterPro" id="IPR013087">
    <property type="entry name" value="Znf_C2H2_type"/>
</dbReference>
<dbReference type="PANTHER" id="PTHR16515">
    <property type="entry name" value="PR DOMAIN ZINC FINGER PROTEIN"/>
    <property type="match status" value="1"/>
</dbReference>
<dbReference type="PANTHER" id="PTHR16515:SF53">
    <property type="entry name" value="ZINC FINGER PROTEIN 683"/>
    <property type="match status" value="1"/>
</dbReference>
<dbReference type="Pfam" id="PF00096">
    <property type="entry name" value="zf-C2H2"/>
    <property type="match status" value="3"/>
</dbReference>
<dbReference type="SMART" id="SM00355">
    <property type="entry name" value="ZnF_C2H2"/>
    <property type="match status" value="4"/>
</dbReference>
<dbReference type="SUPFAM" id="SSF57667">
    <property type="entry name" value="beta-beta-alpha zinc fingers"/>
    <property type="match status" value="2"/>
</dbReference>
<dbReference type="PROSITE" id="PS00028">
    <property type="entry name" value="ZINC_FINGER_C2H2_1"/>
    <property type="match status" value="3"/>
</dbReference>
<dbReference type="PROSITE" id="PS50157">
    <property type="entry name" value="ZINC_FINGER_C2H2_2"/>
    <property type="match status" value="4"/>
</dbReference>
<comment type="function">
    <text evidence="1">Transcription factor that mediates a transcriptional program in various innate and adaptive immune tissue-resident lymphocyte T-cell types such as tissue-resident memory T (Trm), natural killer (trNK) and natural killer T (NKT) cells and negatively regulates gene expression of proteins that promote the egress of tissue-resident T-cell populations from non-lymphoid organs. Plays a role in the development, retention and long-term establishment of adaptive and innate tissue-resident lymphocyte T cell types in non-lymphoid organs, such as the skin and gut, but also in other nonbarrier tissues like liver and kidney, and therefore may provide immediate immunological protection against reactivating infections or viral reinfection. Also plays a role in the differentiation of both thymic and peripheral NKT cells. Negatively regulates the accumulation of interferon-gamma (IFN-gamma) in NKT cells at steady state or after antigenic stimulation. Positively regulates granzyme B production in NKT cells after innate stimulation. Associates with the transcriptional repressor PRDM1/BLIMP1 to chromatin at gene promoter regions.</text>
</comment>
<comment type="function">
    <molecule>Isoform 1</molecule>
    <text evidence="6">Lacks transcriptional repressor activity. Binds to DNA within promoter regions of the transcriptional repressor PRDM1/BLIMP1 target sites. Unable to regulate interferon-gamma (IFN-gamma) production in cytomegalovirus (CMV)-infected effector CD8(+) T-cells.</text>
</comment>
<comment type="function">
    <molecule>Isoform 2</molecule>
    <text evidence="6">Transcriptional repressor that binds to DNA within promoter regions of the transcriptional repressor PRDM1/BLIMP1 target sites. Regulates interferon-gamma (IFN-gamma) production in cytomegalovirus (CMV)-infected effector CD8(+) T cells.</text>
</comment>
<comment type="interaction">
    <interactant intactId="EBI-12005952">
        <id>Q8IZ20</id>
    </interactant>
    <interactant intactId="EBI-3867333">
        <id>A8MQ03</id>
        <label>CYSRT1</label>
    </interactant>
    <organismsDiffer>false</organismsDiffer>
    <experiments>3</experiments>
</comment>
<comment type="interaction">
    <interactant intactId="EBI-12005952">
        <id>Q8IZ20</id>
    </interactant>
    <interactant intactId="EBI-11962084">
        <id>Q3LI66</id>
        <label>KRTAP6-2</label>
    </interactant>
    <organismsDiffer>false</organismsDiffer>
    <experiments>3</experiments>
</comment>
<comment type="interaction">
    <interactant intactId="EBI-12005952">
        <id>Q8IZ20</id>
    </interactant>
    <interactant intactId="EBI-12754095">
        <id>P86480</id>
        <label>PRR20D</label>
    </interactant>
    <organismsDiffer>false</organismsDiffer>
    <experiments>3</experiments>
</comment>
<comment type="interaction">
    <interactant intactId="EBI-12005952">
        <id>Q8IZ20</id>
    </interactant>
    <interactant intactId="EBI-372094">
        <id>Q9BQY4</id>
        <label>RHOXF2</label>
    </interactant>
    <organismsDiffer>false</organismsDiffer>
    <experiments>3</experiments>
</comment>
<comment type="interaction">
    <interactant intactId="EBI-12005952">
        <id>Q8IZ20</id>
    </interactant>
    <interactant intactId="EBI-373456">
        <id>Q9Y3S2</id>
        <label>ZNF330</label>
    </interactant>
    <organismsDiffer>false</organismsDiffer>
    <experiments>3</experiments>
</comment>
<comment type="subcellular location">
    <subcellularLocation>
        <location evidence="9">Nucleus</location>
    </subcellularLocation>
</comment>
<comment type="alternative products">
    <event type="alternative splicing"/>
    <isoform>
        <id>Q8IZ20-1</id>
        <name>1</name>
        <name>Extra large</name>
        <name evidence="8">XL</name>
        <sequence type="displayed"/>
    </isoform>
    <isoform>
        <id>Q8IZ20-2</id>
        <name>2</name>
        <name>Large</name>
        <name evidence="8">L</name>
        <sequence type="described" ref="VSP_018167"/>
    </isoform>
</comment>
<comment type="tissue specificity">
    <text evidence="6">Expressed in terminally differentiated effector CD8(+) T-cells, but not in naive and central memory cells (PubMed:26179882). Expressed in terminally differentiated natural killer (NK) cells and natural killer (NKT) T-cells (at protein level) (PubMed:26179882). Expressed strongly in effector-type CD8(+) T-cells and weakly in naive and memory CD8(+) T-cells (PubMed:26179882). Expressed in terminally differentiated natural killer (NK) cells (PubMed:26179882). Isoform 2 is strongly expressed in effector CD8(+) T and natural killer (NK) cells (PubMed:26179882). Isoform 1 is expressed in effector CD8(+) T and natural killer (NK) cells (PubMed:26179882).</text>
</comment>
<comment type="tissue specificity">
    <text evidence="5">(Microbial infection) Expressed in cytomegalovirus (CMV)-infected effector CD8(+) T-cells (at protein level) (PubMed:20921622).</text>
</comment>
<comment type="induction">
    <text evidence="5">(Microbial infection) Up-regulated by cytomegalovirus (CMV) infection in long-lived effector CD8(+) T-cells (PubMed:20921622).</text>
</comment>
<comment type="domain">
    <text evidence="6">The C2H2-type zinc finger are necessary for DNA-binding (PubMed:26179882).</text>
</comment>
<comment type="similarity">
    <text evidence="9">Belongs to the krueppel C2H2-type zinc-finger protein family.</text>
</comment>
<comment type="sequence caution" evidence="9">
    <conflict type="erroneous initiation">
        <sequence resource="EMBL-CDS" id="AAH28731"/>
    </conflict>
</comment>
<comment type="sequence caution" evidence="9">
    <conflict type="erroneous initiation">
        <sequence resource="EMBL-CDS" id="AAH29505"/>
    </conflict>
</comment>
<feature type="chain" id="PRO_0000234002" description="Tissue-resident T-cell transcription regulator protein ZNF683">
    <location>
        <begin position="1"/>
        <end position="524"/>
    </location>
</feature>
<feature type="zinc finger region" description="C2H2-type 1" evidence="2">
    <location>
        <begin position="322"/>
        <end position="344"/>
    </location>
</feature>
<feature type="zinc finger region" description="C2H2-type 2" evidence="2">
    <location>
        <begin position="350"/>
        <end position="372"/>
    </location>
</feature>
<feature type="zinc finger region" description="C2H2-type 3; degenerate" evidence="2">
    <location>
        <begin position="398"/>
        <end position="420"/>
    </location>
</feature>
<feature type="zinc finger region" description="C2H2-type 4" evidence="2">
    <location>
        <begin position="426"/>
        <end position="448"/>
    </location>
</feature>
<feature type="region of interest" description="Disordered" evidence="3">
    <location>
        <begin position="130"/>
        <end position="166"/>
    </location>
</feature>
<feature type="region of interest" description="Disordered" evidence="3">
    <location>
        <begin position="265"/>
        <end position="303"/>
    </location>
</feature>
<feature type="compositionally biased region" description="Basic and acidic residues" evidence="3">
    <location>
        <begin position="130"/>
        <end position="142"/>
    </location>
</feature>
<feature type="splice variant" id="VSP_018167" description="In isoform 2." evidence="7">
    <location>
        <begin position="382"/>
        <end position="401"/>
    </location>
</feature>
<feature type="sequence variant" id="VAR_057442" description="In dbSNP:rs35040247.">
    <original>G</original>
    <variation>V</variation>
    <location>
        <position position="22"/>
    </location>
</feature>
<feature type="sequence variant" id="VAR_057443" description="In dbSNP:rs10794532.">
    <original>D</original>
    <variation>G</variation>
    <location>
        <position position="48"/>
    </location>
</feature>
<feature type="sequence variant" id="VAR_057444" description="In dbSNP:rs10794531.">
    <original>H</original>
    <variation>R</variation>
    <location>
        <position position="53"/>
    </location>
</feature>
<feature type="sequence variant" id="VAR_026155" description="In dbSNP:rs17852672." evidence="4">
    <original>H</original>
    <variation>N</variation>
    <location>
        <position position="204"/>
    </location>
</feature>
<feature type="sequence variant" id="VAR_057445" description="In dbSNP:rs11247933.">
    <original>R</original>
    <variation>L</variation>
    <location>
        <position position="288"/>
    </location>
</feature>
<keyword id="KW-1064">Adaptive immunity</keyword>
<keyword id="KW-0025">Alternative splicing</keyword>
<keyword id="KW-0238">DNA-binding</keyword>
<keyword id="KW-0945">Host-virus interaction</keyword>
<keyword id="KW-0391">Immunity</keyword>
<keyword id="KW-0399">Innate immunity</keyword>
<keyword id="KW-0479">Metal-binding</keyword>
<keyword id="KW-0539">Nucleus</keyword>
<keyword id="KW-1267">Proteomics identification</keyword>
<keyword id="KW-1185">Reference proteome</keyword>
<keyword id="KW-0677">Repeat</keyword>
<keyword id="KW-0804">Transcription</keyword>
<keyword id="KW-0805">Transcription regulation</keyword>
<keyword id="KW-0862">Zinc</keyword>
<keyword id="KW-0863">Zinc-finger</keyword>
<organism>
    <name type="scientific">Homo sapiens</name>
    <name type="common">Human</name>
    <dbReference type="NCBI Taxonomy" id="9606"/>
    <lineage>
        <taxon>Eukaryota</taxon>
        <taxon>Metazoa</taxon>
        <taxon>Chordata</taxon>
        <taxon>Craniata</taxon>
        <taxon>Vertebrata</taxon>
        <taxon>Euteleostomi</taxon>
        <taxon>Mammalia</taxon>
        <taxon>Eutheria</taxon>
        <taxon>Euarchontoglires</taxon>
        <taxon>Primates</taxon>
        <taxon>Haplorrhini</taxon>
        <taxon>Catarrhini</taxon>
        <taxon>Hominidae</taxon>
        <taxon>Homo</taxon>
    </lineage>
</organism>
<reference key="1">
    <citation type="journal article" date="2006" name="Nature">
        <title>The DNA sequence and biological annotation of human chromosome 1.</title>
        <authorList>
            <person name="Gregory S.G."/>
            <person name="Barlow K.F."/>
            <person name="McLay K.E."/>
            <person name="Kaul R."/>
            <person name="Swarbreck D."/>
            <person name="Dunham A."/>
            <person name="Scott C.E."/>
            <person name="Howe K.L."/>
            <person name="Woodfine K."/>
            <person name="Spencer C.C.A."/>
            <person name="Jones M.C."/>
            <person name="Gillson C."/>
            <person name="Searle S."/>
            <person name="Zhou Y."/>
            <person name="Kokocinski F."/>
            <person name="McDonald L."/>
            <person name="Evans R."/>
            <person name="Phillips K."/>
            <person name="Atkinson A."/>
            <person name="Cooper R."/>
            <person name="Jones C."/>
            <person name="Hall R.E."/>
            <person name="Andrews T.D."/>
            <person name="Lloyd C."/>
            <person name="Ainscough R."/>
            <person name="Almeida J.P."/>
            <person name="Ambrose K.D."/>
            <person name="Anderson F."/>
            <person name="Andrew R.W."/>
            <person name="Ashwell R.I.S."/>
            <person name="Aubin K."/>
            <person name="Babbage A.K."/>
            <person name="Bagguley C.L."/>
            <person name="Bailey J."/>
            <person name="Beasley H."/>
            <person name="Bethel G."/>
            <person name="Bird C.P."/>
            <person name="Bray-Allen S."/>
            <person name="Brown J.Y."/>
            <person name="Brown A.J."/>
            <person name="Buckley D."/>
            <person name="Burton J."/>
            <person name="Bye J."/>
            <person name="Carder C."/>
            <person name="Chapman J.C."/>
            <person name="Clark S.Y."/>
            <person name="Clarke G."/>
            <person name="Clee C."/>
            <person name="Cobley V."/>
            <person name="Collier R.E."/>
            <person name="Corby N."/>
            <person name="Coville G.J."/>
            <person name="Davies J."/>
            <person name="Deadman R."/>
            <person name="Dunn M."/>
            <person name="Earthrowl M."/>
            <person name="Ellington A.G."/>
            <person name="Errington H."/>
            <person name="Frankish A."/>
            <person name="Frankland J."/>
            <person name="French L."/>
            <person name="Garner P."/>
            <person name="Garnett J."/>
            <person name="Gay L."/>
            <person name="Ghori M.R.J."/>
            <person name="Gibson R."/>
            <person name="Gilby L.M."/>
            <person name="Gillett W."/>
            <person name="Glithero R.J."/>
            <person name="Grafham D.V."/>
            <person name="Griffiths C."/>
            <person name="Griffiths-Jones S."/>
            <person name="Grocock R."/>
            <person name="Hammond S."/>
            <person name="Harrison E.S.I."/>
            <person name="Hart E."/>
            <person name="Haugen E."/>
            <person name="Heath P.D."/>
            <person name="Holmes S."/>
            <person name="Holt K."/>
            <person name="Howden P.J."/>
            <person name="Hunt A.R."/>
            <person name="Hunt S.E."/>
            <person name="Hunter G."/>
            <person name="Isherwood J."/>
            <person name="James R."/>
            <person name="Johnson C."/>
            <person name="Johnson D."/>
            <person name="Joy A."/>
            <person name="Kay M."/>
            <person name="Kershaw J.K."/>
            <person name="Kibukawa M."/>
            <person name="Kimberley A.M."/>
            <person name="King A."/>
            <person name="Knights A.J."/>
            <person name="Lad H."/>
            <person name="Laird G."/>
            <person name="Lawlor S."/>
            <person name="Leongamornlert D.A."/>
            <person name="Lloyd D.M."/>
            <person name="Loveland J."/>
            <person name="Lovell J."/>
            <person name="Lush M.J."/>
            <person name="Lyne R."/>
            <person name="Martin S."/>
            <person name="Mashreghi-Mohammadi M."/>
            <person name="Matthews L."/>
            <person name="Matthews N.S.W."/>
            <person name="McLaren S."/>
            <person name="Milne S."/>
            <person name="Mistry S."/>
            <person name="Moore M.J.F."/>
            <person name="Nickerson T."/>
            <person name="O'Dell C.N."/>
            <person name="Oliver K."/>
            <person name="Palmeiri A."/>
            <person name="Palmer S.A."/>
            <person name="Parker A."/>
            <person name="Patel D."/>
            <person name="Pearce A.V."/>
            <person name="Peck A.I."/>
            <person name="Pelan S."/>
            <person name="Phelps K."/>
            <person name="Phillimore B.J."/>
            <person name="Plumb R."/>
            <person name="Rajan J."/>
            <person name="Raymond C."/>
            <person name="Rouse G."/>
            <person name="Saenphimmachak C."/>
            <person name="Sehra H.K."/>
            <person name="Sheridan E."/>
            <person name="Shownkeen R."/>
            <person name="Sims S."/>
            <person name="Skuce C.D."/>
            <person name="Smith M."/>
            <person name="Steward C."/>
            <person name="Subramanian S."/>
            <person name="Sycamore N."/>
            <person name="Tracey A."/>
            <person name="Tromans A."/>
            <person name="Van Helmond Z."/>
            <person name="Wall M."/>
            <person name="Wallis J.M."/>
            <person name="White S."/>
            <person name="Whitehead S.L."/>
            <person name="Wilkinson J.E."/>
            <person name="Willey D.L."/>
            <person name="Williams H."/>
            <person name="Wilming L."/>
            <person name="Wray P.W."/>
            <person name="Wu Z."/>
            <person name="Coulson A."/>
            <person name="Vaudin M."/>
            <person name="Sulston J.E."/>
            <person name="Durbin R.M."/>
            <person name="Hubbard T."/>
            <person name="Wooster R."/>
            <person name="Dunham I."/>
            <person name="Carter N.P."/>
            <person name="McVean G."/>
            <person name="Ross M.T."/>
            <person name="Harrow J."/>
            <person name="Olson M.V."/>
            <person name="Beck S."/>
            <person name="Rogers J."/>
            <person name="Bentley D.R."/>
        </authorList>
    </citation>
    <scope>NUCLEOTIDE SEQUENCE [LARGE SCALE GENOMIC DNA]</scope>
</reference>
<reference key="2">
    <citation type="journal article" date="2004" name="Genome Res.">
        <title>The status, quality, and expansion of the NIH full-length cDNA project: the Mammalian Gene Collection (MGC).</title>
        <authorList>
            <consortium name="The MGC Project Team"/>
        </authorList>
    </citation>
    <scope>NUCLEOTIDE SEQUENCE [LARGE SCALE MRNA] (ISOFORMS 1 AND 2)</scope>
    <scope>VARIANT ASN-204</scope>
    <source>
        <tissue>Testis</tissue>
    </source>
</reference>
<reference key="3">
    <citation type="journal article" date="2010" name="J. Clin. Invest.">
        <title>Molecular profiling of cytomegalovirus-induced human CD8+ T cell differentiation.</title>
        <authorList>
            <person name="Hertoghs K.M."/>
            <person name="Moerland P.D."/>
            <person name="van Stijn A."/>
            <person name="Remmerswaal E.B."/>
            <person name="Yong S.L."/>
            <person name="van de Berg P.J."/>
            <person name="van Ham S.M."/>
            <person name="Baas F."/>
            <person name="ten Berge I.J."/>
            <person name="van Lier R.A."/>
        </authorList>
    </citation>
    <scope>TISSUE SPECIFICITY (MICROBIAL INFECTION)</scope>
    <scope>INDUCTION (MICROBIAL INFECTION)</scope>
</reference>
<reference key="4">
    <citation type="journal article" date="2015" name="Eur. J. Immunol.">
        <title>Blimp-1 homolog Hobit identifies effector-type lymphocytes in humans.</title>
        <authorList>
            <person name="Vieira Braga F.A."/>
            <person name="Hertoghs K.M."/>
            <person name="Kragten N.A."/>
            <person name="Doody G.M."/>
            <person name="Barnes N.A."/>
            <person name="Remmerswaal E.B."/>
            <person name="Hsiao C.C."/>
            <person name="Moerland P.D."/>
            <person name="Wouters D."/>
            <person name="Derks I.A."/>
            <person name="van Stijn A."/>
            <person name="Demkes M."/>
            <person name="Hamann J."/>
            <person name="Eldering E."/>
            <person name="Nolte M.A."/>
            <person name="Tooze R.M."/>
            <person name="ten Berge I.J."/>
            <person name="van Gisbergen K.P."/>
            <person name="van Lier R.A."/>
        </authorList>
    </citation>
    <scope>FUNCTION (ISOFORM 1)</scope>
    <scope>LACK OF FUNCTION (ISOFORM 2)</scope>
    <scope>DNA-BINDING (ISOFORMS 1 AND 2)</scope>
    <scope>DOMAIN</scope>
    <scope>ALTERNATIVE SPLICING (ISOFORMS 1 AND 2)</scope>
    <scope>TISSUE SPECIFICITY (ISOFORMS 1 AND 2)</scope>
</reference>